<gene>
    <name type="primary">GALNT4</name>
</gene>
<evidence type="ECO:0000250" key="1"/>
<evidence type="ECO:0000250" key="2">
    <source>
        <dbReference type="UniProtKB" id="Q10471"/>
    </source>
</evidence>
<evidence type="ECO:0000255" key="3"/>
<evidence type="ECO:0000255" key="4">
    <source>
        <dbReference type="PROSITE-ProRule" id="PRU00174"/>
    </source>
</evidence>
<evidence type="ECO:0000269" key="5">
    <source>
    </source>
</evidence>
<evidence type="ECO:0000269" key="6">
    <source>
    </source>
</evidence>
<evidence type="ECO:0000269" key="7">
    <source>
    </source>
</evidence>
<evidence type="ECO:0000269" key="8">
    <source>
    </source>
</evidence>
<evidence type="ECO:0000269" key="9">
    <source>
    </source>
</evidence>
<evidence type="ECO:0000269" key="10">
    <source>
    </source>
</evidence>
<evidence type="ECO:0000303" key="11">
    <source>
    </source>
</evidence>
<evidence type="ECO:0000303" key="12">
    <source>
    </source>
</evidence>
<evidence type="ECO:0000305" key="13"/>
<evidence type="ECO:0000305" key="14">
    <source>
    </source>
</evidence>
<evidence type="ECO:0007744" key="15">
    <source>
        <dbReference type="PDB" id="5NQA"/>
    </source>
</evidence>
<evidence type="ECO:0007829" key="16">
    <source>
        <dbReference type="PDB" id="5NQA"/>
    </source>
</evidence>
<evidence type="ECO:0007829" key="17">
    <source>
        <dbReference type="PDB" id="6H0B"/>
    </source>
</evidence>
<dbReference type="EC" id="2.4.1.41" evidence="5 9 10"/>
<dbReference type="EMBL" id="Y08564">
    <property type="protein sequence ID" value="CAA69875.1"/>
    <property type="molecule type" value="Genomic_DNA"/>
</dbReference>
<dbReference type="EMBL" id="AK297677">
    <property type="protein sequence ID" value="BAG60038.1"/>
    <property type="molecule type" value="mRNA"/>
</dbReference>
<dbReference type="EMBL" id="AK312870">
    <property type="protein sequence ID" value="BAG35722.1"/>
    <property type="molecule type" value="mRNA"/>
</dbReference>
<dbReference type="EMBL" id="AC010201">
    <property type="status" value="NOT_ANNOTATED_CDS"/>
    <property type="molecule type" value="Genomic_DNA"/>
</dbReference>
<dbReference type="EMBL" id="AC025034">
    <property type="status" value="NOT_ANNOTATED_CDS"/>
    <property type="molecule type" value="Genomic_DNA"/>
</dbReference>
<dbReference type="EMBL" id="BC036390">
    <property type="protein sequence ID" value="AAH36390.1"/>
    <property type="molecule type" value="mRNA"/>
</dbReference>
<dbReference type="CCDS" id="CCDS53817.1">
    <molecule id="Q8N4A0-1"/>
</dbReference>
<dbReference type="RefSeq" id="NP_001186711.1">
    <molecule id="Q8N4A0-2"/>
    <property type="nucleotide sequence ID" value="NM_001199782.1"/>
</dbReference>
<dbReference type="RefSeq" id="NP_003765.2">
    <molecule id="Q8N4A0-1"/>
    <property type="nucleotide sequence ID" value="NM_003774.4"/>
</dbReference>
<dbReference type="PDB" id="5NQA">
    <property type="method" value="X-ray"/>
    <property type="resolution" value="1.90 A"/>
    <property type="chains" value="A/B=1-578"/>
</dbReference>
<dbReference type="PDB" id="6H0B">
    <property type="method" value="X-ray"/>
    <property type="resolution" value="1.80 A"/>
    <property type="chains" value="A/B=1-578"/>
</dbReference>
<dbReference type="PDBsum" id="5NQA"/>
<dbReference type="PDBsum" id="6H0B"/>
<dbReference type="SMR" id="Q8N4A0"/>
<dbReference type="BioGRID" id="114240">
    <property type="interactions" value="16"/>
</dbReference>
<dbReference type="BioGRID" id="1529357">
    <property type="interactions" value="2"/>
</dbReference>
<dbReference type="FunCoup" id="Q8N4A0">
    <property type="interactions" value="329"/>
</dbReference>
<dbReference type="IntAct" id="Q8N4A0">
    <property type="interactions" value="11"/>
</dbReference>
<dbReference type="STRING" id="9606.ENSP00000436604"/>
<dbReference type="CAZy" id="CBM13">
    <property type="family name" value="Carbohydrate-Binding Module Family 13"/>
</dbReference>
<dbReference type="CAZy" id="GT27">
    <property type="family name" value="Glycosyltransferase Family 27"/>
</dbReference>
<dbReference type="UniLectin" id="Q8N4A0"/>
<dbReference type="GlyCosmos" id="Q8N4A0">
    <property type="glycosylation" value="2 sites, 2 glycans"/>
</dbReference>
<dbReference type="GlyGen" id="Q8N4A0">
    <property type="glycosylation" value="3 sites, 2 O-linked glycans (1 site)"/>
</dbReference>
<dbReference type="iPTMnet" id="Q8N4A0"/>
<dbReference type="PhosphoSitePlus" id="Q8N4A0"/>
<dbReference type="SwissPalm" id="Q8N4A0"/>
<dbReference type="BioMuta" id="GALNT4"/>
<dbReference type="DMDM" id="338817878"/>
<dbReference type="jPOST" id="Q8N4A0"/>
<dbReference type="MassIVE" id="Q8N4A0"/>
<dbReference type="PaxDb" id="9606-ENSP00000436604"/>
<dbReference type="PeptideAtlas" id="Q8N4A0"/>
<dbReference type="Antibodypedia" id="53055">
    <property type="antibodies" value="150 antibodies from 25 providers"/>
</dbReference>
<dbReference type="DNASU" id="8693"/>
<dbReference type="Ensembl" id="ENST00000529983.3">
    <molecule id="Q8N4A0-1"/>
    <property type="protein sequence ID" value="ENSP00000436604.2"/>
    <property type="gene ID" value="ENSG00000257594.4"/>
</dbReference>
<dbReference type="GeneID" id="100528030"/>
<dbReference type="GeneID" id="8693"/>
<dbReference type="KEGG" id="hsa:100528030"/>
<dbReference type="KEGG" id="hsa:8693"/>
<dbReference type="MANE-Select" id="ENST00000529983.3">
    <property type="protein sequence ID" value="ENSP00000436604.2"/>
    <property type="RefSeq nucleotide sequence ID" value="NM_003774.5"/>
    <property type="RefSeq protein sequence ID" value="NP_003765.2"/>
</dbReference>
<dbReference type="UCSC" id="uc001tbd.4">
    <molecule id="Q8N4A0-1"/>
    <property type="organism name" value="human"/>
</dbReference>
<dbReference type="AGR" id="HGNC:4126"/>
<dbReference type="AGR" id="HGNC:42957"/>
<dbReference type="CTD" id="100528030"/>
<dbReference type="CTD" id="8693"/>
<dbReference type="DisGeNET" id="100528030"/>
<dbReference type="DisGeNET" id="8693"/>
<dbReference type="GeneCards" id="GALNT4"/>
<dbReference type="HGNC" id="HGNC:4126">
    <property type="gene designation" value="GALNT4"/>
</dbReference>
<dbReference type="HPA" id="ENSG00000257594">
    <property type="expression patterns" value="Tissue enhanced (stomach)"/>
</dbReference>
<dbReference type="MIM" id="603565">
    <property type="type" value="gene"/>
</dbReference>
<dbReference type="neXtProt" id="NX_Q8N4A0"/>
<dbReference type="OpenTargets" id="ENSG00000257594"/>
<dbReference type="PharmGKB" id="PA28539"/>
<dbReference type="VEuPathDB" id="HostDB:ENSG00000257594"/>
<dbReference type="eggNOG" id="KOG3736">
    <property type="taxonomic scope" value="Eukaryota"/>
</dbReference>
<dbReference type="GeneTree" id="ENSGT00940000163607"/>
<dbReference type="HOGENOM" id="CLU_013477_0_1_1"/>
<dbReference type="InParanoid" id="Q8N4A0"/>
<dbReference type="OMA" id="DWNNFEF"/>
<dbReference type="OrthoDB" id="416652at2759"/>
<dbReference type="PAN-GO" id="Q8N4A0">
    <property type="GO annotations" value="2 GO annotations based on evolutionary models"/>
</dbReference>
<dbReference type="PhylomeDB" id="Q8N4A0"/>
<dbReference type="TreeFam" id="TF352660"/>
<dbReference type="BRENDA" id="2.4.1.41">
    <property type="organism ID" value="2681"/>
</dbReference>
<dbReference type="PathwayCommons" id="Q8N4A0"/>
<dbReference type="Reactome" id="R-HSA-913709">
    <property type="pathway name" value="O-linked glycosylation of mucins"/>
</dbReference>
<dbReference type="SignaLink" id="Q8N4A0"/>
<dbReference type="UniPathway" id="UPA00378"/>
<dbReference type="BioGRID-ORCS" id="100528030">
    <property type="hits" value="33 hits in 1000 CRISPR screens"/>
</dbReference>
<dbReference type="BioGRID-ORCS" id="8693">
    <property type="hits" value="8 hits in 1140 CRISPR screens"/>
</dbReference>
<dbReference type="Pharos" id="Q8N4A0">
    <property type="development level" value="Tbio"/>
</dbReference>
<dbReference type="PRO" id="PR:Q8N4A0"/>
<dbReference type="Proteomes" id="UP000005640">
    <property type="component" value="Chromosome 12"/>
</dbReference>
<dbReference type="RNAct" id="Q8N4A0">
    <property type="molecule type" value="protein"/>
</dbReference>
<dbReference type="Bgee" id="ENSG00000257594">
    <property type="expression patterns" value="Expressed in endometrium and 102 other cell types or tissues"/>
</dbReference>
<dbReference type="GO" id="GO:0070062">
    <property type="term" value="C:extracellular exosome"/>
    <property type="evidence" value="ECO:0007005"/>
    <property type="project" value="UniProtKB"/>
</dbReference>
<dbReference type="GO" id="GO:0000139">
    <property type="term" value="C:Golgi membrane"/>
    <property type="evidence" value="ECO:0000304"/>
    <property type="project" value="Reactome"/>
</dbReference>
<dbReference type="GO" id="GO:0048471">
    <property type="term" value="C:perinuclear region of cytoplasm"/>
    <property type="evidence" value="ECO:0000314"/>
    <property type="project" value="BHF-UCL"/>
</dbReference>
<dbReference type="GO" id="GO:0030246">
    <property type="term" value="F:carbohydrate binding"/>
    <property type="evidence" value="ECO:0007669"/>
    <property type="project" value="UniProtKB-KW"/>
</dbReference>
<dbReference type="GO" id="GO:0030145">
    <property type="term" value="F:manganese ion binding"/>
    <property type="evidence" value="ECO:0000314"/>
    <property type="project" value="UniProtKB"/>
</dbReference>
<dbReference type="GO" id="GO:0004653">
    <property type="term" value="F:polypeptide N-acetylgalactosaminyltransferase activity"/>
    <property type="evidence" value="ECO:0000314"/>
    <property type="project" value="UniProtKB"/>
</dbReference>
<dbReference type="GO" id="GO:0016266">
    <property type="term" value="P:O-glycan processing"/>
    <property type="evidence" value="ECO:0000304"/>
    <property type="project" value="Reactome"/>
</dbReference>
<dbReference type="GO" id="GO:0006493">
    <property type="term" value="P:protein O-linked glycosylation"/>
    <property type="evidence" value="ECO:0000318"/>
    <property type="project" value="GO_Central"/>
</dbReference>
<dbReference type="GO" id="GO:0018242">
    <property type="term" value="P:protein O-linked glycosylation via serine"/>
    <property type="evidence" value="ECO:0000314"/>
    <property type="project" value="UniProtKB"/>
</dbReference>
<dbReference type="GO" id="GO:0018243">
    <property type="term" value="P:protein O-linked glycosylation via threonine"/>
    <property type="evidence" value="ECO:0000314"/>
    <property type="project" value="UniProtKB"/>
</dbReference>
<dbReference type="CDD" id="cd23469">
    <property type="entry name" value="beta-trefoil_Ricin_GALNT4"/>
    <property type="match status" value="1"/>
</dbReference>
<dbReference type="CDD" id="cd02510">
    <property type="entry name" value="pp-GalNAc-T"/>
    <property type="match status" value="1"/>
</dbReference>
<dbReference type="FunFam" id="2.80.10.50:FF:000054">
    <property type="entry name" value="Polypeptide N-acetylgalactosaminyltransferase"/>
    <property type="match status" value="1"/>
</dbReference>
<dbReference type="FunFam" id="3.90.550.10:FF:000021">
    <property type="entry name" value="Polypeptide N-acetylgalactosaminyltransferase"/>
    <property type="match status" value="1"/>
</dbReference>
<dbReference type="Gene3D" id="2.80.10.50">
    <property type="match status" value="1"/>
</dbReference>
<dbReference type="Gene3D" id="3.90.550.10">
    <property type="entry name" value="Spore Coat Polysaccharide Biosynthesis Protein SpsA, Chain A"/>
    <property type="match status" value="1"/>
</dbReference>
<dbReference type="InterPro" id="IPR045885">
    <property type="entry name" value="GalNAc-T"/>
</dbReference>
<dbReference type="InterPro" id="IPR001173">
    <property type="entry name" value="Glyco_trans_2-like"/>
</dbReference>
<dbReference type="InterPro" id="IPR029044">
    <property type="entry name" value="Nucleotide-diphossugar_trans"/>
</dbReference>
<dbReference type="InterPro" id="IPR035992">
    <property type="entry name" value="Ricin_B-like_lectins"/>
</dbReference>
<dbReference type="InterPro" id="IPR000772">
    <property type="entry name" value="Ricin_B_lectin"/>
</dbReference>
<dbReference type="PANTHER" id="PTHR11675">
    <property type="entry name" value="N-ACETYLGALACTOSAMINYLTRANSFERASE"/>
    <property type="match status" value="1"/>
</dbReference>
<dbReference type="PANTHER" id="PTHR11675:SF7">
    <property type="entry name" value="POLYPEPTIDE N-ACETYLGALACTOSAMINYLTRANSFERASE 4"/>
    <property type="match status" value="1"/>
</dbReference>
<dbReference type="Pfam" id="PF00535">
    <property type="entry name" value="Glycos_transf_2"/>
    <property type="match status" value="1"/>
</dbReference>
<dbReference type="Pfam" id="PF00652">
    <property type="entry name" value="Ricin_B_lectin"/>
    <property type="match status" value="1"/>
</dbReference>
<dbReference type="SMART" id="SM00458">
    <property type="entry name" value="RICIN"/>
    <property type="match status" value="1"/>
</dbReference>
<dbReference type="SUPFAM" id="SSF53448">
    <property type="entry name" value="Nucleotide-diphospho-sugar transferases"/>
    <property type="match status" value="1"/>
</dbReference>
<dbReference type="SUPFAM" id="SSF50370">
    <property type="entry name" value="Ricin B-like lectins"/>
    <property type="match status" value="1"/>
</dbReference>
<dbReference type="PROSITE" id="PS50231">
    <property type="entry name" value="RICIN_B_LECTIN"/>
    <property type="match status" value="1"/>
</dbReference>
<proteinExistence type="evidence at protein level"/>
<reference key="1">
    <citation type="journal article" date="1998" name="J. Biol. Chem.">
        <title>Cloning of a human UDP-N-acetyl-alpha-D-Galactosamine:polypeptide N-acetylgalactosaminyltransferase that complements other GalNAc-transferases in complete O-glycosylation of the MUC1 tandem repeat.</title>
        <authorList>
            <person name="Bennett E.P."/>
            <person name="Hassan H."/>
            <person name="Mandel U."/>
            <person name="Mirgorodskaya E."/>
            <person name="Roepstorff P."/>
            <person name="Burchell J."/>
            <person name="Taylor-Papadimitriou J."/>
            <person name="Hollingsworth M.A."/>
            <person name="Merkx G."/>
            <person name="van Kessel A.G."/>
            <person name="Eiberg H."/>
            <person name="Steffensen R."/>
            <person name="Clausen H."/>
        </authorList>
    </citation>
    <scope>NUCLEOTIDE SEQUENCE [GENOMIC DNA]</scope>
    <scope>FUNCTION</scope>
    <scope>CATALYTIC ACTIVITY</scope>
    <scope>PATHWAY</scope>
    <scope>SUBCELLULAR LOCATION</scope>
    <scope>TISSUE SPECIFICITY</scope>
    <scope>VARIANT ILE-506</scope>
</reference>
<reference key="2">
    <citation type="journal article" date="2004" name="Nat. Genet.">
        <title>Complete sequencing and characterization of 21,243 full-length human cDNAs.</title>
        <authorList>
            <person name="Ota T."/>
            <person name="Suzuki Y."/>
            <person name="Nishikawa T."/>
            <person name="Otsuki T."/>
            <person name="Sugiyama T."/>
            <person name="Irie R."/>
            <person name="Wakamatsu A."/>
            <person name="Hayashi K."/>
            <person name="Sato H."/>
            <person name="Nagai K."/>
            <person name="Kimura K."/>
            <person name="Makita H."/>
            <person name="Sekine M."/>
            <person name="Obayashi M."/>
            <person name="Nishi T."/>
            <person name="Shibahara T."/>
            <person name="Tanaka T."/>
            <person name="Ishii S."/>
            <person name="Yamamoto J."/>
            <person name="Saito K."/>
            <person name="Kawai Y."/>
            <person name="Isono Y."/>
            <person name="Nakamura Y."/>
            <person name="Nagahari K."/>
            <person name="Murakami K."/>
            <person name="Yasuda T."/>
            <person name="Iwayanagi T."/>
            <person name="Wagatsuma M."/>
            <person name="Shiratori A."/>
            <person name="Sudo H."/>
            <person name="Hosoiri T."/>
            <person name="Kaku Y."/>
            <person name="Kodaira H."/>
            <person name="Kondo H."/>
            <person name="Sugawara M."/>
            <person name="Takahashi M."/>
            <person name="Kanda K."/>
            <person name="Yokoi T."/>
            <person name="Furuya T."/>
            <person name="Kikkawa E."/>
            <person name="Omura Y."/>
            <person name="Abe K."/>
            <person name="Kamihara K."/>
            <person name="Katsuta N."/>
            <person name="Sato K."/>
            <person name="Tanikawa M."/>
            <person name="Yamazaki M."/>
            <person name="Ninomiya K."/>
            <person name="Ishibashi T."/>
            <person name="Yamashita H."/>
            <person name="Murakawa K."/>
            <person name="Fujimori K."/>
            <person name="Tanai H."/>
            <person name="Kimata M."/>
            <person name="Watanabe M."/>
            <person name="Hiraoka S."/>
            <person name="Chiba Y."/>
            <person name="Ishida S."/>
            <person name="Ono Y."/>
            <person name="Takiguchi S."/>
            <person name="Watanabe S."/>
            <person name="Yosida M."/>
            <person name="Hotuta T."/>
            <person name="Kusano J."/>
            <person name="Kanehori K."/>
            <person name="Takahashi-Fujii A."/>
            <person name="Hara H."/>
            <person name="Tanase T.-O."/>
            <person name="Nomura Y."/>
            <person name="Togiya S."/>
            <person name="Komai F."/>
            <person name="Hara R."/>
            <person name="Takeuchi K."/>
            <person name="Arita M."/>
            <person name="Imose N."/>
            <person name="Musashino K."/>
            <person name="Yuuki H."/>
            <person name="Oshima A."/>
            <person name="Sasaki N."/>
            <person name="Aotsuka S."/>
            <person name="Yoshikawa Y."/>
            <person name="Matsunawa H."/>
            <person name="Ichihara T."/>
            <person name="Shiohata N."/>
            <person name="Sano S."/>
            <person name="Moriya S."/>
            <person name="Momiyama H."/>
            <person name="Satoh N."/>
            <person name="Takami S."/>
            <person name="Terashima Y."/>
            <person name="Suzuki O."/>
            <person name="Nakagawa S."/>
            <person name="Senoh A."/>
            <person name="Mizoguchi H."/>
            <person name="Goto Y."/>
            <person name="Shimizu F."/>
            <person name="Wakebe H."/>
            <person name="Hishigaki H."/>
            <person name="Watanabe T."/>
            <person name="Sugiyama A."/>
            <person name="Takemoto M."/>
            <person name="Kawakami B."/>
            <person name="Yamazaki M."/>
            <person name="Watanabe K."/>
            <person name="Kumagai A."/>
            <person name="Itakura S."/>
            <person name="Fukuzumi Y."/>
            <person name="Fujimori Y."/>
            <person name="Komiyama M."/>
            <person name="Tashiro H."/>
            <person name="Tanigami A."/>
            <person name="Fujiwara T."/>
            <person name="Ono T."/>
            <person name="Yamada K."/>
            <person name="Fujii Y."/>
            <person name="Ozaki K."/>
            <person name="Hirao M."/>
            <person name="Ohmori Y."/>
            <person name="Kawabata A."/>
            <person name="Hikiji T."/>
            <person name="Kobatake N."/>
            <person name="Inagaki H."/>
            <person name="Ikema Y."/>
            <person name="Okamoto S."/>
            <person name="Okitani R."/>
            <person name="Kawakami T."/>
            <person name="Noguchi S."/>
            <person name="Itoh T."/>
            <person name="Shigeta K."/>
            <person name="Senba T."/>
            <person name="Matsumura K."/>
            <person name="Nakajima Y."/>
            <person name="Mizuno T."/>
            <person name="Morinaga M."/>
            <person name="Sasaki M."/>
            <person name="Togashi T."/>
            <person name="Oyama M."/>
            <person name="Hata H."/>
            <person name="Watanabe M."/>
            <person name="Komatsu T."/>
            <person name="Mizushima-Sugano J."/>
            <person name="Satoh T."/>
            <person name="Shirai Y."/>
            <person name="Takahashi Y."/>
            <person name="Nakagawa K."/>
            <person name="Okumura K."/>
            <person name="Nagase T."/>
            <person name="Nomura N."/>
            <person name="Kikuchi H."/>
            <person name="Masuho Y."/>
            <person name="Yamashita R."/>
            <person name="Nakai K."/>
            <person name="Yada T."/>
            <person name="Nakamura Y."/>
            <person name="Ohara O."/>
            <person name="Isogai T."/>
            <person name="Sugano S."/>
        </authorList>
    </citation>
    <scope>NUCLEOTIDE SEQUENCE [LARGE SCALE MRNA] (ISOFORMS 1 AND 2)</scope>
    <scope>VARIANTS THR-270 AND ILE-506</scope>
    <source>
        <tissue>Kidney</tissue>
        <tissue>Trachea</tissue>
    </source>
</reference>
<reference key="3">
    <citation type="journal article" date="2006" name="Nature">
        <title>The finished DNA sequence of human chromosome 12.</title>
        <authorList>
            <person name="Scherer S.E."/>
            <person name="Muzny D.M."/>
            <person name="Buhay C.J."/>
            <person name="Chen R."/>
            <person name="Cree A."/>
            <person name="Ding Y."/>
            <person name="Dugan-Rocha S."/>
            <person name="Gill R."/>
            <person name="Gunaratne P."/>
            <person name="Harris R.A."/>
            <person name="Hawes A.C."/>
            <person name="Hernandez J."/>
            <person name="Hodgson A.V."/>
            <person name="Hume J."/>
            <person name="Jackson A."/>
            <person name="Khan Z.M."/>
            <person name="Kovar-Smith C."/>
            <person name="Lewis L.R."/>
            <person name="Lozado R.J."/>
            <person name="Metzker M.L."/>
            <person name="Milosavljevic A."/>
            <person name="Miner G.R."/>
            <person name="Montgomery K.T."/>
            <person name="Morgan M.B."/>
            <person name="Nazareth L.V."/>
            <person name="Scott G."/>
            <person name="Sodergren E."/>
            <person name="Song X.-Z."/>
            <person name="Steffen D."/>
            <person name="Lovering R.C."/>
            <person name="Wheeler D.A."/>
            <person name="Worley K.C."/>
            <person name="Yuan Y."/>
            <person name="Zhang Z."/>
            <person name="Adams C.Q."/>
            <person name="Ansari-Lari M.A."/>
            <person name="Ayele M."/>
            <person name="Brown M.J."/>
            <person name="Chen G."/>
            <person name="Chen Z."/>
            <person name="Clerc-Blankenburg K.P."/>
            <person name="Davis C."/>
            <person name="Delgado O."/>
            <person name="Dinh H.H."/>
            <person name="Draper H."/>
            <person name="Gonzalez-Garay M.L."/>
            <person name="Havlak P."/>
            <person name="Jackson L.R."/>
            <person name="Jacob L.S."/>
            <person name="Kelly S.H."/>
            <person name="Li L."/>
            <person name="Li Z."/>
            <person name="Liu J."/>
            <person name="Liu W."/>
            <person name="Lu J."/>
            <person name="Maheshwari M."/>
            <person name="Nguyen B.-V."/>
            <person name="Okwuonu G.O."/>
            <person name="Pasternak S."/>
            <person name="Perez L.M."/>
            <person name="Plopper F.J.H."/>
            <person name="Santibanez J."/>
            <person name="Shen H."/>
            <person name="Tabor P.E."/>
            <person name="Verduzco D."/>
            <person name="Waldron L."/>
            <person name="Wang Q."/>
            <person name="Williams G.A."/>
            <person name="Zhang J."/>
            <person name="Zhou J."/>
            <person name="Allen C.C."/>
            <person name="Amin A.G."/>
            <person name="Anyalebechi V."/>
            <person name="Bailey M."/>
            <person name="Barbaria J.A."/>
            <person name="Bimage K.E."/>
            <person name="Bryant N.P."/>
            <person name="Burch P.E."/>
            <person name="Burkett C.E."/>
            <person name="Burrell K.L."/>
            <person name="Calderon E."/>
            <person name="Cardenas V."/>
            <person name="Carter K."/>
            <person name="Casias K."/>
            <person name="Cavazos I."/>
            <person name="Cavazos S.R."/>
            <person name="Ceasar H."/>
            <person name="Chacko J."/>
            <person name="Chan S.N."/>
            <person name="Chavez D."/>
            <person name="Christopoulos C."/>
            <person name="Chu J."/>
            <person name="Cockrell R."/>
            <person name="Cox C.D."/>
            <person name="Dang M."/>
            <person name="Dathorne S.R."/>
            <person name="David R."/>
            <person name="Davis C.M."/>
            <person name="Davy-Carroll L."/>
            <person name="Deshazo D.R."/>
            <person name="Donlin J.E."/>
            <person name="D'Souza L."/>
            <person name="Eaves K.A."/>
            <person name="Egan A."/>
            <person name="Emery-Cohen A.J."/>
            <person name="Escotto M."/>
            <person name="Flagg N."/>
            <person name="Forbes L.D."/>
            <person name="Gabisi A.M."/>
            <person name="Garza M."/>
            <person name="Hamilton C."/>
            <person name="Henderson N."/>
            <person name="Hernandez O."/>
            <person name="Hines S."/>
            <person name="Hogues M.E."/>
            <person name="Huang M."/>
            <person name="Idlebird D.G."/>
            <person name="Johnson R."/>
            <person name="Jolivet A."/>
            <person name="Jones S."/>
            <person name="Kagan R."/>
            <person name="King L.M."/>
            <person name="Leal B."/>
            <person name="Lebow H."/>
            <person name="Lee S."/>
            <person name="LeVan J.M."/>
            <person name="Lewis L.C."/>
            <person name="London P."/>
            <person name="Lorensuhewa L.M."/>
            <person name="Loulseged H."/>
            <person name="Lovett D.A."/>
            <person name="Lucier A."/>
            <person name="Lucier R.L."/>
            <person name="Ma J."/>
            <person name="Madu R.C."/>
            <person name="Mapua P."/>
            <person name="Martindale A.D."/>
            <person name="Martinez E."/>
            <person name="Massey E."/>
            <person name="Mawhiney S."/>
            <person name="Meador M.G."/>
            <person name="Mendez S."/>
            <person name="Mercado C."/>
            <person name="Mercado I.C."/>
            <person name="Merritt C.E."/>
            <person name="Miner Z.L."/>
            <person name="Minja E."/>
            <person name="Mitchell T."/>
            <person name="Mohabbat F."/>
            <person name="Mohabbat K."/>
            <person name="Montgomery B."/>
            <person name="Moore N."/>
            <person name="Morris S."/>
            <person name="Munidasa M."/>
            <person name="Ngo R.N."/>
            <person name="Nguyen N.B."/>
            <person name="Nickerson E."/>
            <person name="Nwaokelemeh O.O."/>
            <person name="Nwokenkwo S."/>
            <person name="Obregon M."/>
            <person name="Oguh M."/>
            <person name="Oragunye N."/>
            <person name="Oviedo R.J."/>
            <person name="Parish B.J."/>
            <person name="Parker D.N."/>
            <person name="Parrish J."/>
            <person name="Parks K.L."/>
            <person name="Paul H.A."/>
            <person name="Payton B.A."/>
            <person name="Perez A."/>
            <person name="Perrin W."/>
            <person name="Pickens A."/>
            <person name="Primus E.L."/>
            <person name="Pu L.-L."/>
            <person name="Puazo M."/>
            <person name="Quiles M.M."/>
            <person name="Quiroz J.B."/>
            <person name="Rabata D."/>
            <person name="Reeves K."/>
            <person name="Ruiz S.J."/>
            <person name="Shao H."/>
            <person name="Sisson I."/>
            <person name="Sonaike T."/>
            <person name="Sorelle R.P."/>
            <person name="Sutton A.E."/>
            <person name="Svatek A.F."/>
            <person name="Svetz L.A."/>
            <person name="Tamerisa K.S."/>
            <person name="Taylor T.R."/>
            <person name="Teague B."/>
            <person name="Thomas N."/>
            <person name="Thorn R.D."/>
            <person name="Trejos Z.Y."/>
            <person name="Trevino B.K."/>
            <person name="Ukegbu O.N."/>
            <person name="Urban J.B."/>
            <person name="Vasquez L.I."/>
            <person name="Vera V.A."/>
            <person name="Villasana D.M."/>
            <person name="Wang L."/>
            <person name="Ward-Moore S."/>
            <person name="Warren J.T."/>
            <person name="Wei X."/>
            <person name="White F."/>
            <person name="Williamson A.L."/>
            <person name="Wleczyk R."/>
            <person name="Wooden H.S."/>
            <person name="Wooden S.H."/>
            <person name="Yen J."/>
            <person name="Yoon L."/>
            <person name="Yoon V."/>
            <person name="Zorrilla S.E."/>
            <person name="Nelson D."/>
            <person name="Kucherlapati R."/>
            <person name="Weinstock G."/>
            <person name="Gibbs R.A."/>
        </authorList>
    </citation>
    <scope>NUCLEOTIDE SEQUENCE [LARGE SCALE GENOMIC DNA]</scope>
</reference>
<reference key="4">
    <citation type="journal article" date="2004" name="Genome Res.">
        <title>The status, quality, and expansion of the NIH full-length cDNA project: the Mammalian Gene Collection (MGC).</title>
        <authorList>
            <consortium name="The MGC Project Team"/>
        </authorList>
    </citation>
    <scope>NUCLEOTIDE SEQUENCE [LARGE SCALE MRNA] (ISOFORM 1)</scope>
    <scope>VARIANT GLY-51</scope>
    <source>
        <tissue>Brain</tissue>
    </source>
</reference>
<reference key="5">
    <citation type="journal article" date="2000" name="J. Biol. Chem.">
        <title>The lectin domain of UDP-N-acetyl-D-galactosamine: polypeptide N-acetylgalactosaminyltransferase-T4 directs its glycopeptide specificities.</title>
        <authorList>
            <person name="Hassan H."/>
            <person name="Reis C.A."/>
            <person name="Bennett E.P."/>
            <person name="Mirgorodskaya E."/>
            <person name="Roepstorff P."/>
            <person name="Hollingsworth M.A."/>
            <person name="Burchell J."/>
            <person name="Taylor-Papadimitriou J."/>
            <person name="Clausen H."/>
        </authorList>
    </citation>
    <scope>FUNCTION</scope>
    <scope>DOMAIN</scope>
    <scope>PATHWAY</scope>
    <scope>MUTAGENESIS OF ASP-459</scope>
</reference>
<reference key="6">
    <citation type="journal article" date="2006" name="Glycobiology">
        <title>Chemoenzymatically synthesized multimeric Tn/STn MUC1 glycopeptides elicit cancer-specific anti-MUC1 antibody responses and override tolerance.</title>
        <authorList>
            <person name="Soerensen A.L."/>
            <person name="Reis C.A."/>
            <person name="Tarp M.A."/>
            <person name="Mandel U."/>
            <person name="Ramachandran K."/>
            <person name="Sankaranarayanan V."/>
            <person name="Schwientek T."/>
            <person name="Graham R."/>
            <person name="Taylor-Papadimitriou J."/>
            <person name="Hollingsworth M.A."/>
            <person name="Burchell J."/>
            <person name="Clausen H."/>
        </authorList>
    </citation>
    <scope>FUNCTION</scope>
    <scope>CATALYTIC ACTIVITY</scope>
</reference>
<reference evidence="15" key="7">
    <citation type="journal article" date="2017" name="Nat. Commun.">
        <title>The interdomain flexible linker of the polypeptide GalNAc transferases dictates their long-range glycosylation preferences.</title>
        <authorList>
            <person name="de Las Rivas M."/>
            <person name="Lira-Navarrete E."/>
            <person name="Daniel E.J.P."/>
            <person name="Companon I."/>
            <person name="Coelho H."/>
            <person name="Diniz A."/>
            <person name="Jimenez-Barbero J."/>
            <person name="Peregrina J.M."/>
            <person name="Clausen H."/>
            <person name="Corzana F."/>
            <person name="Marcelo F."/>
            <person name="Jimenez-Oses G."/>
            <person name="Gerken T.A."/>
            <person name="Hurtado-Guerrero R."/>
        </authorList>
    </citation>
    <scope>X-RAY CRYSTALLOGRAPHY (1.90 ANGSTROMS) IN COMPLEX WITH SUBSTRATE ANALOG</scope>
    <scope>DOMAIN</scope>
    <scope>CATALYTIC ACTIVITY</scope>
    <scope>FUNCTION</scope>
    <scope>PATHWAY</scope>
    <scope>COFACTOR</scope>
    <scope>DISULFIDE BONDS</scope>
</reference>
<feature type="chain" id="PRO_0000059108" description="Polypeptide N-acetylgalactosaminyltransferase 4">
    <location>
        <begin position="1"/>
        <end position="578"/>
    </location>
</feature>
<feature type="topological domain" description="Cytoplasmic" evidence="3">
    <location>
        <begin position="1"/>
        <end position="12"/>
    </location>
</feature>
<feature type="transmembrane region" description="Helical; Signal-anchor for type II membrane protein" evidence="3">
    <location>
        <begin position="13"/>
        <end position="35"/>
    </location>
</feature>
<feature type="topological domain" description="Lumenal" evidence="3">
    <location>
        <begin position="36"/>
        <end position="578"/>
    </location>
</feature>
<feature type="domain" description="Ricin B-type lectin" evidence="4">
    <location>
        <begin position="444"/>
        <end position="577"/>
    </location>
</feature>
<feature type="region of interest" description="Catalytic subdomain A">
    <location>
        <begin position="134"/>
        <end position="243"/>
    </location>
</feature>
<feature type="region of interest" description="Catalytic subdomain B">
    <location>
        <begin position="303"/>
        <end position="365"/>
    </location>
</feature>
<feature type="binding site" evidence="2">
    <location>
        <position position="175"/>
    </location>
    <ligand>
        <name>substrate</name>
    </ligand>
</feature>
<feature type="binding site" evidence="2">
    <location>
        <position position="204"/>
    </location>
    <ligand>
        <name>substrate</name>
    </ligand>
</feature>
<feature type="binding site" evidence="2">
    <location>
        <position position="227"/>
    </location>
    <ligand>
        <name>Mn(2+)</name>
        <dbReference type="ChEBI" id="CHEBI:29035"/>
    </ligand>
</feature>
<feature type="binding site" evidence="2">
    <location>
        <position position="229"/>
    </location>
    <ligand>
        <name>Mn(2+)</name>
        <dbReference type="ChEBI" id="CHEBI:29035"/>
    </ligand>
</feature>
<feature type="binding site" evidence="2">
    <location>
        <position position="334"/>
    </location>
    <ligand>
        <name>substrate</name>
    </ligand>
</feature>
<feature type="binding site" evidence="2">
    <location>
        <position position="362"/>
    </location>
    <ligand>
        <name>Mn(2+)</name>
        <dbReference type="ChEBI" id="CHEBI:29035"/>
    </ligand>
</feature>
<feature type="binding site" evidence="2">
    <location>
        <position position="370"/>
    </location>
    <ligand>
        <name>substrate</name>
    </ligand>
</feature>
<feature type="site" description="Interaction with glycopeptide substrate" evidence="9">
    <location>
        <position position="459"/>
    </location>
</feature>
<feature type="site" description="Interaction with glycopeptide substrate" evidence="9">
    <location>
        <position position="478"/>
    </location>
</feature>
<feature type="site" description="Interaction with glycopeptide substrate" evidence="9">
    <location>
        <position position="483"/>
    </location>
</feature>
<feature type="glycosylation site" description="N-linked (GlcNAc...) asparagine" evidence="3">
    <location>
        <position position="471"/>
    </location>
</feature>
<feature type="disulfide bond" evidence="4 9 15">
    <location>
        <begin position="124"/>
        <end position="357"/>
    </location>
</feature>
<feature type="disulfide bond" evidence="4 9 15">
    <location>
        <begin position="348"/>
        <end position="421"/>
    </location>
</feature>
<feature type="disulfide bond" evidence="4 9 15">
    <location>
        <begin position="457"/>
        <end position="477"/>
    </location>
</feature>
<feature type="disulfide bond" evidence="4 9 15">
    <location>
        <begin position="503"/>
        <end position="518"/>
    </location>
</feature>
<feature type="disulfide bond" evidence="4 9 15">
    <location>
        <begin position="547"/>
        <end position="565"/>
    </location>
</feature>
<feature type="splice variant" id="VSP_045009" description="In isoform 2." evidence="11">
    <original>MAVRWTWAGKSCLLLAFLTVAYIFVELLVSTFHASAGAGRARELGSRRLSDLQKNTEDLSRPLYKKPPADSRALGEWGKASKLQLNEDELKQQEELIERYAINIYLSDRISLHRHIEDKR</original>
    <variation>MAWCVATADPAHTSRPLFTGLAVSRGSAGHAWSAGFDWAAVVVVTGRRCRSGQTVPGAARSPLLPHPLPSPLRVPPPTGALGRPLPRWPQPRRTPFWSVISKATKLRSPPWTSAPTASNL</variation>
    <location>
        <begin position="1"/>
        <end position="120"/>
    </location>
</feature>
<feature type="splice variant" id="VSP_045010" description="In isoform 2." evidence="11">
    <location>
        <begin position="121"/>
        <end position="292"/>
    </location>
</feature>
<feature type="sequence variant" id="VAR_065257" description="In dbSNP:rs17853610." evidence="7">
    <original>D</original>
    <variation>G</variation>
    <location>
        <position position="51"/>
    </location>
</feature>
<feature type="sequence variant" id="VAR_019576" description="In dbSNP:rs2230281." evidence="6">
    <original>I</original>
    <variation>T</variation>
    <location>
        <position position="270"/>
    </location>
</feature>
<feature type="sequence variant" id="VAR_019577" description="In dbSNP:rs2230283." evidence="6 10">
    <original>V</original>
    <variation>I</variation>
    <location>
        <position position="506"/>
    </location>
</feature>
<feature type="mutagenesis site" description="Affects the glycopeptide specificity and abolishes ability to glycosylate Muc1, Muc2 and Muc5AC." evidence="5">
    <original>D</original>
    <variation>H</variation>
    <location>
        <position position="459"/>
    </location>
</feature>
<feature type="sequence conflict" description="In Ref. 1; CAA69875." evidence="13" ref="1">
    <original>S</original>
    <variation>T</variation>
    <location>
        <position position="11"/>
    </location>
</feature>
<feature type="sequence conflict" description="In Ref. 1; CAA69875." evidence="13" ref="1">
    <original>D</original>
    <variation>Y</variation>
    <location>
        <position position="227"/>
    </location>
</feature>
<feature type="sequence conflict" description="In Ref. 1; CAA69875." evidence="13" ref="1">
    <original>D</original>
    <variation>Y</variation>
    <location>
        <position position="247"/>
    </location>
</feature>
<feature type="strand" evidence="17">
    <location>
        <begin position="62"/>
        <end position="64"/>
    </location>
</feature>
<feature type="helix" evidence="17">
    <location>
        <begin position="76"/>
        <end position="78"/>
    </location>
</feature>
<feature type="helix" evidence="17">
    <location>
        <begin position="87"/>
        <end position="100"/>
    </location>
</feature>
<feature type="helix" evidence="17">
    <location>
        <begin position="104"/>
        <end position="107"/>
    </location>
</feature>
<feature type="helix" evidence="17">
    <location>
        <begin position="122"/>
        <end position="125"/>
    </location>
</feature>
<feature type="turn" evidence="17">
    <location>
        <begin position="131"/>
        <end position="133"/>
    </location>
</feature>
<feature type="strand" evidence="17">
    <location>
        <begin position="137"/>
        <end position="145"/>
    </location>
</feature>
<feature type="helix" evidence="17">
    <location>
        <begin position="148"/>
        <end position="161"/>
    </location>
</feature>
<feature type="turn" evidence="17">
    <location>
        <begin position="164"/>
        <end position="166"/>
    </location>
</feature>
<feature type="strand" evidence="17">
    <location>
        <begin position="167"/>
        <end position="174"/>
    </location>
</feature>
<feature type="helix" evidence="17">
    <location>
        <begin position="180"/>
        <end position="182"/>
    </location>
</feature>
<feature type="helix" evidence="17">
    <location>
        <begin position="184"/>
        <end position="191"/>
    </location>
</feature>
<feature type="strand" evidence="17">
    <location>
        <begin position="196"/>
        <end position="200"/>
    </location>
</feature>
<feature type="helix" evidence="17">
    <location>
        <begin position="207"/>
        <end position="217"/>
    </location>
</feature>
<feature type="strand" evidence="17">
    <location>
        <begin position="220"/>
        <end position="225"/>
    </location>
</feature>
<feature type="strand" evidence="17">
    <location>
        <begin position="228"/>
        <end position="232"/>
    </location>
</feature>
<feature type="helix" evidence="17">
    <location>
        <begin position="237"/>
        <end position="246"/>
    </location>
</feature>
<feature type="strand" evidence="17">
    <location>
        <begin position="250"/>
        <end position="259"/>
    </location>
</feature>
<feature type="turn" evidence="17">
    <location>
        <begin position="261"/>
        <end position="263"/>
    </location>
</feature>
<feature type="strand" evidence="17">
    <location>
        <begin position="275"/>
        <end position="278"/>
    </location>
</feature>
<feature type="strand" evidence="17">
    <location>
        <begin position="284"/>
        <end position="287"/>
    </location>
</feature>
<feature type="helix" evidence="17">
    <location>
        <begin position="291"/>
        <end position="296"/>
    </location>
</feature>
<feature type="strand" evidence="17">
    <location>
        <begin position="314"/>
        <end position="317"/>
    </location>
</feature>
<feature type="helix" evidence="17">
    <location>
        <begin position="318"/>
        <end position="323"/>
    </location>
</feature>
<feature type="helix" evidence="17">
    <location>
        <begin position="329"/>
        <end position="331"/>
    </location>
</feature>
<feature type="strand" evidence="16">
    <location>
        <begin position="333"/>
        <end position="335"/>
    </location>
</feature>
<feature type="helix" evidence="17">
    <location>
        <begin position="338"/>
        <end position="347"/>
    </location>
</feature>
<feature type="strand" evidence="17">
    <location>
        <begin position="351"/>
        <end position="363"/>
    </location>
</feature>
<feature type="helix" evidence="17">
    <location>
        <begin position="376"/>
        <end position="386"/>
    </location>
</feature>
<feature type="helix" evidence="17">
    <location>
        <begin position="388"/>
        <end position="390"/>
    </location>
</feature>
<feature type="helix" evidence="17">
    <location>
        <begin position="391"/>
        <end position="397"/>
    </location>
</feature>
<feature type="helix" evidence="17">
    <location>
        <begin position="399"/>
        <end position="403"/>
    </location>
</feature>
<feature type="helix" evidence="17">
    <location>
        <begin position="410"/>
        <end position="418"/>
    </location>
</feature>
<feature type="helix" evidence="17">
    <location>
        <begin position="424"/>
        <end position="430"/>
    </location>
</feature>
<feature type="strand" evidence="17">
    <location>
        <begin position="444"/>
        <end position="451"/>
    </location>
</feature>
<feature type="turn" evidence="17">
    <location>
        <begin position="452"/>
        <end position="455"/>
    </location>
</feature>
<feature type="strand" evidence="17">
    <location>
        <begin position="456"/>
        <end position="459"/>
    </location>
</feature>
<feature type="strand" evidence="17">
    <location>
        <begin position="464"/>
        <end position="466"/>
    </location>
</feature>
<feature type="strand" evidence="17">
    <location>
        <begin position="473"/>
        <end position="476"/>
    </location>
</feature>
<feature type="helix" evidence="17">
    <location>
        <begin position="482"/>
        <end position="484"/>
    </location>
</feature>
<feature type="strand" evidence="17">
    <location>
        <begin position="486"/>
        <end position="488"/>
    </location>
</feature>
<feature type="strand" evidence="17">
    <location>
        <begin position="494"/>
        <end position="496"/>
    </location>
</feature>
<feature type="strand" evidence="17">
    <location>
        <begin position="498"/>
        <end position="500"/>
    </location>
</feature>
<feature type="strand" evidence="17">
    <location>
        <begin position="502"/>
        <end position="505"/>
    </location>
</feature>
<feature type="strand" evidence="17">
    <location>
        <begin position="514"/>
        <end position="517"/>
    </location>
</feature>
<feature type="helix" evidence="17">
    <location>
        <begin position="527"/>
        <end position="529"/>
    </location>
</feature>
<feature type="strand" evidence="16">
    <location>
        <begin position="539"/>
        <end position="541"/>
    </location>
</feature>
<feature type="turn" evidence="17">
    <location>
        <begin position="542"/>
        <end position="544"/>
    </location>
</feature>
<feature type="strand" evidence="17">
    <location>
        <begin position="547"/>
        <end position="552"/>
    </location>
</feature>
<feature type="strand" evidence="17">
    <location>
        <begin position="558"/>
        <end position="564"/>
    </location>
</feature>
<feature type="strand" evidence="17">
    <location>
        <begin position="567"/>
        <end position="569"/>
    </location>
</feature>
<feature type="helix" evidence="17">
    <location>
        <begin position="570"/>
        <end position="572"/>
    </location>
</feature>
<feature type="strand" evidence="17">
    <location>
        <begin position="574"/>
        <end position="577"/>
    </location>
</feature>
<comment type="function">
    <text evidence="5 8 9 10">Catalyzes the initial reaction in O-linked oligosaccharide biosynthesis, the transfer of an N-acetyl-D-galactosamine residue to a serine or threonine residue on the protein receptor. Has a highest activity toward Muc7, EA2 and Muc2, with a lowest activity than GALNT2. Glycosylates 'Thr-57' of SELPLG.</text>
</comment>
<comment type="catalytic activity">
    <reaction evidence="5 8 9 10">
        <text>L-seryl-[protein] + UDP-N-acetyl-alpha-D-galactosamine = a 3-O-[N-acetyl-alpha-D-galactosaminyl]-L-seryl-[protein] + UDP + H(+)</text>
        <dbReference type="Rhea" id="RHEA:23956"/>
        <dbReference type="Rhea" id="RHEA-COMP:9863"/>
        <dbReference type="Rhea" id="RHEA-COMP:12788"/>
        <dbReference type="ChEBI" id="CHEBI:15378"/>
        <dbReference type="ChEBI" id="CHEBI:29999"/>
        <dbReference type="ChEBI" id="CHEBI:53604"/>
        <dbReference type="ChEBI" id="CHEBI:58223"/>
        <dbReference type="ChEBI" id="CHEBI:67138"/>
        <dbReference type="EC" id="2.4.1.41"/>
    </reaction>
</comment>
<comment type="catalytic activity">
    <reaction evidence="5 8 9 10">
        <text>L-threonyl-[protein] + UDP-N-acetyl-alpha-D-galactosamine = a 3-O-[N-acetyl-alpha-D-galactosaminyl]-L-threonyl-[protein] + UDP + H(+)</text>
        <dbReference type="Rhea" id="RHEA:52424"/>
        <dbReference type="Rhea" id="RHEA-COMP:11060"/>
        <dbReference type="Rhea" id="RHEA-COMP:11689"/>
        <dbReference type="ChEBI" id="CHEBI:15378"/>
        <dbReference type="ChEBI" id="CHEBI:30013"/>
        <dbReference type="ChEBI" id="CHEBI:58223"/>
        <dbReference type="ChEBI" id="CHEBI:67138"/>
        <dbReference type="ChEBI" id="CHEBI:87075"/>
        <dbReference type="EC" id="2.4.1.41"/>
    </reaction>
</comment>
<comment type="cofactor">
    <cofactor evidence="9">
        <name>Mn(2+)</name>
        <dbReference type="ChEBI" id="CHEBI:29035"/>
    </cofactor>
</comment>
<comment type="pathway">
    <text evidence="5 9 10">Protein modification; protein glycosylation.</text>
</comment>
<comment type="interaction">
    <interactant intactId="EBI-21555925">
        <id>Q8N4A0</id>
    </interactant>
    <interactant intactId="EBI-21895464">
        <id>Q13790</id>
        <label>APOF</label>
    </interactant>
    <organismsDiffer>false</organismsDiffer>
    <experiments>2</experiments>
</comment>
<comment type="interaction">
    <interactant intactId="EBI-21555925">
        <id>Q8N4A0</id>
    </interactant>
    <interactant intactId="EBI-466029">
        <id>P42858</id>
        <label>HTT</label>
    </interactant>
    <organismsDiffer>false</organismsDiffer>
    <experiments>12</experiments>
</comment>
<comment type="subcellular location">
    <subcellularLocation>
        <location evidence="14">Golgi apparatus membrane</location>
        <topology evidence="14">Single-pass type II membrane protein</topology>
    </subcellularLocation>
</comment>
<comment type="alternative products">
    <event type="alternative splicing"/>
    <isoform>
        <id>Q8N4A0-1</id>
        <name>1</name>
        <sequence type="displayed"/>
    </isoform>
    <isoform>
        <id>Q8N4A0-2</id>
        <name>2</name>
        <sequence type="described" ref="VSP_045009 VSP_045010"/>
    </isoform>
</comment>
<comment type="tissue specificity">
    <text evidence="10">Ubiquitous. Highly expressed in mucous cells.</text>
</comment>
<comment type="domain">
    <text evidence="1">There are two conserved domains in the glycosyltransferase region: the N-terminal domain (domain A, also called GT1 motif), which is probably involved in manganese coordination and substrate binding and the C-terminal domain (domain B, also called Gal/GalNAc-T motif), which is probably involved in catalytic reaction and UDP-Gal binding.</text>
</comment>
<comment type="domain">
    <text evidence="5 9">The ricin B-type lectin domain directs the glycopeptide specificity. It is required in the glycopeptide specificity of enzyme activity but not for activity with naked peptide substrates, suggesting that it triggers the catalytic domain to act on GalNAc-glycopeptide substrates.</text>
</comment>
<comment type="similarity">
    <text evidence="13">Belongs to the glycosyltransferase 2 family. GalNAc-T subfamily.</text>
</comment>
<comment type="online information" name="Functional Glycomics Gateway - GTase">
    <link uri="http://www.functionalglycomics.org/glycomics/molecule/jsp/glycoEnzyme/viewGlycoEnzyme.jsp?gbpId=gt_hum_486"/>
    <text>Polypeptide N-acetylgalactosaminyltransferase 4</text>
</comment>
<sequence length="578" mass="66666">MAVRWTWAGKSCLLLAFLTVAYIFVELLVSTFHASAGAGRARELGSRRLSDLQKNTEDLSRPLYKKPPADSRALGEWGKASKLQLNEDELKQQEELIERYAINIYLSDRISLHRHIEDKRMYECKSQKFNYRTLPTTSVIIAFYNEAWSTLLRTIHSVLETSPAVLLKEIILVDDLSDRVYLKTQLETYISNLDRVRLIRTNKREGLVRARLIGATFATGDVLTFLDCHCECNSGWLEPLLERIGRDETAVVCPVIDTIDWNTFEFYMQIGEPMIGGFDWRLTFQWHSVPKQERDRRISRIDPIRSPTMAGGLFAVSKKYFQYLGTYDTGMEVWGGENLELSFRVWQCGGKLEIHPCSHVGHVFPKRAPYARPNFLQNTARAAEVWMDEYKEHFYNRNPPARKEAYGDISERKLLRERLRCKSFDWYLKNVFPNLHVPEDRPGWHGAIRSRGISSECLDYNSPDNNPTGANLSLFGCHGQGGNQFFEYTSNKEIRFNSVTELCAEVPEQKNYVGMQNCPKDGFPVPANIIWHFKEDGTIFHPHSGLCLSAYRTPEGRPDVQMRTCDALDKNQIWSFEK</sequence>
<name>GALT4_HUMAN</name>
<organism>
    <name type="scientific">Homo sapiens</name>
    <name type="common">Human</name>
    <dbReference type="NCBI Taxonomy" id="9606"/>
    <lineage>
        <taxon>Eukaryota</taxon>
        <taxon>Metazoa</taxon>
        <taxon>Chordata</taxon>
        <taxon>Craniata</taxon>
        <taxon>Vertebrata</taxon>
        <taxon>Euteleostomi</taxon>
        <taxon>Mammalia</taxon>
        <taxon>Eutheria</taxon>
        <taxon>Euarchontoglires</taxon>
        <taxon>Primates</taxon>
        <taxon>Haplorrhini</taxon>
        <taxon>Catarrhini</taxon>
        <taxon>Hominidae</taxon>
        <taxon>Homo</taxon>
    </lineage>
</organism>
<keyword id="KW-0002">3D-structure</keyword>
<keyword id="KW-0025">Alternative splicing</keyword>
<keyword id="KW-1015">Disulfide bond</keyword>
<keyword id="KW-0325">Glycoprotein</keyword>
<keyword id="KW-0328">Glycosyltransferase</keyword>
<keyword id="KW-0333">Golgi apparatus</keyword>
<keyword id="KW-0430">Lectin</keyword>
<keyword id="KW-0464">Manganese</keyword>
<keyword id="KW-0472">Membrane</keyword>
<keyword id="KW-0479">Metal-binding</keyword>
<keyword id="KW-1267">Proteomics identification</keyword>
<keyword id="KW-1185">Reference proteome</keyword>
<keyword id="KW-0735">Signal-anchor</keyword>
<keyword id="KW-0808">Transferase</keyword>
<keyword id="KW-0812">Transmembrane</keyword>
<keyword id="KW-1133">Transmembrane helix</keyword>
<accession>Q8N4A0</accession>
<accession>B2R775</accession>
<accession>B4DMX6</accession>
<accession>O00208</accession>
<protein>
    <recommendedName>
        <fullName>Polypeptide N-acetylgalactosaminyltransferase 4</fullName>
        <ecNumber evidence="5 9 10">2.4.1.41</ecNumber>
    </recommendedName>
    <alternativeName>
        <fullName>Polypeptide GalNAc transferase 4</fullName>
        <shortName evidence="12">GalNAc-T4</shortName>
        <shortName>pp-GaNTase 4</shortName>
    </alternativeName>
    <alternativeName>
        <fullName>Protein-UDP acetylgalactosaminyltransferase 4</fullName>
    </alternativeName>
    <alternativeName>
        <fullName>UDP-GalNAc:polypeptide N-acetylgalactosaminyltransferase 4</fullName>
    </alternativeName>
</protein>